<comment type="function">
    <text evidence="7">Secreted LysM effector that might have a role in sequestration of chitin oligosaccharides (breakdown products of fungal cell walls that are released during invasion and act as triggers of host immunity) to dampen host defense.</text>
</comment>
<comment type="subcellular location">
    <subcellularLocation>
        <location evidence="7">Secreted</location>
    </subcellularLocation>
</comment>
<comment type="domain">
    <text evidence="7">The LysM (lysin motif) domains are small globular domains involved in binding chitin in eukaryotes. LysM13 contains one LysM domain.</text>
</comment>
<comment type="disruption phenotype">
    <text evidence="4">Show no significant difference in the expansion rate of lesion diameters in apples fruits.</text>
</comment>
<comment type="miscellaneous">
    <text evidence="6">In plants, chitin acts as a microbe-associated molecular pattern (MAMP) that is recognized by lysin motif (LysM)-containing plant cell surface-localized pattern recognition receptors (PRRs) that activate a plethora of downstream immune responses.</text>
</comment>
<comment type="similarity">
    <text evidence="6">Belongs to the secreted LysM effector family.</text>
</comment>
<feature type="signal peptide" evidence="1">
    <location>
        <begin position="1"/>
        <end position="19"/>
    </location>
</feature>
<feature type="chain" id="PRO_5009752829" description="Secreted LysM effector LysM13">
    <location>
        <begin position="20"/>
        <end position="231"/>
    </location>
</feature>
<feature type="domain" description="LysM" evidence="3">
    <location>
        <begin position="38"/>
        <end position="82"/>
    </location>
</feature>
<feature type="glycosylation site" description="N-linked (GlcNAc...) asparagine" evidence="2">
    <location>
        <position position="30"/>
    </location>
</feature>
<feature type="glycosylation site" description="N-linked (GlcNAc...) asparagine" evidence="2">
    <location>
        <position position="34"/>
    </location>
</feature>
<feature type="glycosylation site" description="N-linked (GlcNAc...) asparagine" evidence="2">
    <location>
        <position position="77"/>
    </location>
</feature>
<feature type="glycosylation site" description="N-linked (GlcNAc...) asparagine" evidence="2">
    <location>
        <position position="100"/>
    </location>
</feature>
<feature type="glycosylation site" description="N-linked (GlcNAc...) asparagine" evidence="2">
    <location>
        <position position="130"/>
    </location>
</feature>
<feature type="glycosylation site" description="N-linked (GlcNAc...) asparagine" evidence="2">
    <location>
        <position position="201"/>
    </location>
</feature>
<feature type="glycosylation site" description="N-linked (GlcNAc...) asparagine" evidence="2">
    <location>
        <position position="226"/>
    </location>
</feature>
<accession>A0A0A2KDU4</accession>
<gene>
    <name evidence="5" type="primary">LysM13</name>
    <name type="ORF">PEX2_033310</name>
</gene>
<protein>
    <recommendedName>
        <fullName evidence="5">Secreted LysM effector LysM13</fullName>
    </recommendedName>
    <alternativeName>
        <fullName evidence="5">LysM domain-containing protein 13</fullName>
    </alternativeName>
</protein>
<organism>
    <name type="scientific">Penicillium expansum</name>
    <name type="common">Blue mold rot fungus</name>
    <dbReference type="NCBI Taxonomy" id="27334"/>
    <lineage>
        <taxon>Eukaryota</taxon>
        <taxon>Fungi</taxon>
        <taxon>Dikarya</taxon>
        <taxon>Ascomycota</taxon>
        <taxon>Pezizomycotina</taxon>
        <taxon>Eurotiomycetes</taxon>
        <taxon>Eurotiomycetidae</taxon>
        <taxon>Eurotiales</taxon>
        <taxon>Aspergillaceae</taxon>
        <taxon>Penicillium</taxon>
    </lineage>
</organism>
<dbReference type="EMBL" id="JQFZ01000080">
    <property type="protein sequence ID" value="KGO60192.1"/>
    <property type="molecule type" value="Genomic_DNA"/>
</dbReference>
<dbReference type="RefSeq" id="XP_016601258.1">
    <property type="nucleotide sequence ID" value="XM_016740606.1"/>
</dbReference>
<dbReference type="SMR" id="A0A0A2KDU4"/>
<dbReference type="STRING" id="27334.A0A0A2KDU4"/>
<dbReference type="GeneID" id="27676025"/>
<dbReference type="VEuPathDB" id="FungiDB:PEXP_087950"/>
<dbReference type="HOGENOM" id="CLU_076125_1_0_1"/>
<dbReference type="Proteomes" id="UP000030143">
    <property type="component" value="Unassembled WGS sequence"/>
</dbReference>
<dbReference type="GO" id="GO:0005576">
    <property type="term" value="C:extracellular region"/>
    <property type="evidence" value="ECO:0007669"/>
    <property type="project" value="UniProtKB-SubCell"/>
</dbReference>
<dbReference type="GO" id="GO:0008061">
    <property type="term" value="F:chitin binding"/>
    <property type="evidence" value="ECO:0007669"/>
    <property type="project" value="UniProtKB-KW"/>
</dbReference>
<dbReference type="CDD" id="cd00118">
    <property type="entry name" value="LysM"/>
    <property type="match status" value="1"/>
</dbReference>
<dbReference type="Gene3D" id="3.10.350.10">
    <property type="entry name" value="LysM domain"/>
    <property type="match status" value="1"/>
</dbReference>
<dbReference type="InterPro" id="IPR018392">
    <property type="entry name" value="LysM_dom"/>
</dbReference>
<dbReference type="InterPro" id="IPR036779">
    <property type="entry name" value="LysM_dom_sf"/>
</dbReference>
<dbReference type="Pfam" id="PF01476">
    <property type="entry name" value="LysM"/>
    <property type="match status" value="2"/>
</dbReference>
<dbReference type="SMART" id="SM00257">
    <property type="entry name" value="LysM"/>
    <property type="match status" value="1"/>
</dbReference>
<dbReference type="SUPFAM" id="SSF54106">
    <property type="entry name" value="LysM domain"/>
    <property type="match status" value="1"/>
</dbReference>
<dbReference type="PROSITE" id="PS51782">
    <property type="entry name" value="LYSM"/>
    <property type="match status" value="1"/>
</dbReference>
<proteinExistence type="inferred from homology"/>
<evidence type="ECO:0000255" key="1"/>
<evidence type="ECO:0000255" key="2">
    <source>
        <dbReference type="PROSITE-ProRule" id="PRU00498"/>
    </source>
</evidence>
<evidence type="ECO:0000255" key="3">
    <source>
        <dbReference type="PROSITE-ProRule" id="PRU01118"/>
    </source>
</evidence>
<evidence type="ECO:0000269" key="4">
    <source>
    </source>
</evidence>
<evidence type="ECO:0000303" key="5">
    <source>
    </source>
</evidence>
<evidence type="ECO:0000305" key="6"/>
<evidence type="ECO:0000305" key="7">
    <source>
    </source>
</evidence>
<sequence>MVFLSLKYALSGLAATAAAVPHANRNTCDNSSLNTTATTYTTTSEDTIFTVARKFDRGPCDIARYNRMIDAEHIFANFTLRIPPQVCNPDSTTCFLTRQNATATCLKGGPHDYRTIAGDTIEKIALYKLNMTVESVYENAKMGVSSIHEELPVNTFLKIPQCVPSVCHVTPFHFTYGVYKDIAEMFDTTVGQIMAFNGGYNYSESASDADAAWITVPTGCTNLALNVTEEI</sequence>
<name>LYS13_PENEN</name>
<reference key="1">
    <citation type="journal article" date="2015" name="Mol. Plant Microbe Interact.">
        <title>Genome, transcriptome, and functional analyses of Penicillium expansum provide new insights into secondary metabolism and pathogenicity.</title>
        <authorList>
            <person name="Ballester A.R."/>
            <person name="Marcet-Houben M."/>
            <person name="Levin E."/>
            <person name="Sela N."/>
            <person name="Selma-Lazaro C."/>
            <person name="Carmona L."/>
            <person name="Wisniewski M."/>
            <person name="Droby S."/>
            <person name="Gonzalez-Candelas L."/>
            <person name="Gabaldon T."/>
        </authorList>
    </citation>
    <scope>NUCLEOTIDE SEQUENCE [LARGE SCALE GENOMIC DNA]</scope>
    <source>
        <strain>MD-8</strain>
    </source>
</reference>
<reference key="2">
    <citation type="journal article" date="2020" name="Mol. Genet. Genomics">
        <title>Multiple transcriptomic analyses and characterization of pathogen-related core effectors and LysM family members reveal their differential roles in fungal growth and pathogenicity in Penicillium expansum.</title>
        <authorList>
            <person name="Chen D."/>
            <person name="Li G."/>
            <person name="Liu J."/>
            <person name="Wisniewski M."/>
            <person name="Droby S."/>
            <person name="Levin E."/>
            <person name="Huang S."/>
            <person name="Liu Y."/>
        </authorList>
    </citation>
    <scope>FUNCTION</scope>
    <scope>DISRUPTION PHENOTYPE</scope>
    <scope>DOMAIN</scope>
</reference>
<keyword id="KW-0147">Chitin-binding</keyword>
<keyword id="KW-0325">Glycoprotein</keyword>
<keyword id="KW-1185">Reference proteome</keyword>
<keyword id="KW-0964">Secreted</keyword>
<keyword id="KW-0732">Signal</keyword>
<keyword id="KW-0843">Virulence</keyword>